<feature type="chain" id="PRO_0000256521" description="Programmed cell death protein 4">
    <location>
        <begin position="1"/>
        <end position="469"/>
    </location>
</feature>
<feature type="domain" description="MI 1" evidence="5">
    <location>
        <begin position="163"/>
        <end position="284"/>
    </location>
</feature>
<feature type="domain" description="MI 2" evidence="5">
    <location>
        <begin position="326"/>
        <end position="449"/>
    </location>
</feature>
<feature type="region of interest" description="Disordered" evidence="6">
    <location>
        <begin position="1"/>
        <end position="38"/>
    </location>
</feature>
<feature type="region of interest" description="Disordered" evidence="6">
    <location>
        <begin position="58"/>
        <end position="128"/>
    </location>
</feature>
<feature type="short sequence motif" description="Nuclear localization signal" evidence="4">
    <location>
        <begin position="58"/>
        <end position="64"/>
    </location>
</feature>
<feature type="short sequence motif" description="Phosphodegron" evidence="1">
    <location>
        <begin position="70"/>
        <end position="76"/>
    </location>
</feature>
<feature type="short sequence motif" description="Nuclear localization signal" evidence="4">
    <location>
        <begin position="448"/>
        <end position="454"/>
    </location>
</feature>
<feature type="compositionally biased region" description="Low complexity" evidence="6">
    <location>
        <begin position="74"/>
        <end position="83"/>
    </location>
</feature>
<feature type="compositionally biased region" description="Polar residues" evidence="6">
    <location>
        <begin position="84"/>
        <end position="93"/>
    </location>
</feature>
<feature type="compositionally biased region" description="Gly residues" evidence="6">
    <location>
        <begin position="114"/>
        <end position="125"/>
    </location>
</feature>
<feature type="modified residue" description="N-acetylmethionine" evidence="2">
    <location>
        <position position="1"/>
    </location>
</feature>
<feature type="modified residue" description="Phosphoserine" evidence="3">
    <location>
        <position position="25"/>
    </location>
</feature>
<feature type="modified residue" description="Phosphoserine; by PKB and RPS6KB1" evidence="2">
    <location>
        <position position="67"/>
    </location>
</feature>
<feature type="modified residue" description="Phosphoserine" evidence="2">
    <location>
        <position position="68"/>
    </location>
</feature>
<feature type="modified residue" description="Phosphoserine" evidence="2">
    <location>
        <position position="71"/>
    </location>
</feature>
<feature type="modified residue" description="Phosphoserine" evidence="2">
    <location>
        <position position="76"/>
    </location>
</feature>
<feature type="modified residue" description="Phosphoserine" evidence="2">
    <location>
        <position position="78"/>
    </location>
</feature>
<feature type="modified residue" description="Phosphoserine" evidence="2">
    <location>
        <position position="94"/>
    </location>
</feature>
<feature type="modified residue" description="Phosphotyrosine" evidence="2">
    <location>
        <position position="152"/>
    </location>
</feature>
<feature type="modified residue" description="Phosphoserine" evidence="2">
    <location>
        <position position="313"/>
    </location>
</feature>
<feature type="modified residue" description="Phosphoserine" evidence="2">
    <location>
        <position position="317"/>
    </location>
</feature>
<feature type="modified residue" description="Phosphoserine; by PKB" evidence="2">
    <location>
        <position position="457"/>
    </location>
</feature>
<reference key="1">
    <citation type="submission" date="2004-11" db="EMBL/GenBank/DDBJ databases">
        <authorList>
            <consortium name="The German cDNA consortium"/>
        </authorList>
    </citation>
    <scope>NUCLEOTIDE SEQUENCE [LARGE SCALE MRNA]</scope>
    <source>
        <tissue>Brain cortex</tissue>
    </source>
</reference>
<proteinExistence type="evidence at transcript level"/>
<protein>
    <recommendedName>
        <fullName>Programmed cell death protein 4</fullName>
    </recommendedName>
</protein>
<accession>Q5R8S3</accession>
<comment type="function">
    <text evidence="1">Inhibits translation initiation and cap-dependent translation. May excert its function by hindering the interaction between EIF4A1 and EIF4G. Inhibits the helicase activity of EIF4A. Modulates the activation of JUN kinase. Down-regulates the expression of MAP4K1, thus inhibiting events important in driving invasion, namely, MAPK85 activation and consequent JUN-dependent transcription. May play a role in apoptosis. Tumor suppressor. Inhibits tumor promoter-induced neoplastic transformation. Binds RNA (By similarity).</text>
</comment>
<comment type="subunit">
    <text evidence="1">Interacts (via MI domains) with EIF4A2 (By similarity). Interacts (via MI domains) with EIF4A1 (via N-terminal domain). Heterotrimer with EIF4A1; one molecule of PDCD4 binds two molecules of EIF4A1. Interacts with EIF4G1. May form a complex with EIF4A1 and EIF4G1. The interaction between PDCD4 and EIF4A1 interferes with the interaction between EIF4A1 and EIF4G. When phosphorylated, interacts with BTRC and FBXW11 (By similarity).</text>
</comment>
<comment type="subcellular location">
    <subcellularLocation>
        <location evidence="1">Nucleus</location>
    </subcellularLocation>
    <subcellularLocation>
        <location evidence="1">Cytoplasm</location>
    </subcellularLocation>
    <text evidence="1">Shuttles between the nucleus and cytoplasm. Predominantly nuclear under normal growth conditions, and when phosphorylated at Ser-457 (By similarity).</text>
</comment>
<comment type="domain">
    <text evidence="1">Binds EIF4A1 via both MI domains.</text>
</comment>
<comment type="PTM">
    <text evidence="1">Polyubiquitinated, leading to its proteasomal degradation. Rapidly degraded in response to mitogens. Phosphorylation of the phosphodegron promotes interaction with BTRC and proteasomal degradation (By similarity).</text>
</comment>
<comment type="PTM">
    <text evidence="1">Phosphorylated at Ser-67 by RPS6KB1 in response to mitogens; phosphorylation promotes proteasomal degradation of PDCD4.</text>
</comment>
<comment type="similarity">
    <text evidence="7">Belongs to the PDCD4 family.</text>
</comment>
<evidence type="ECO:0000250" key="1"/>
<evidence type="ECO:0000250" key="2">
    <source>
        <dbReference type="UniProtKB" id="Q53EL6"/>
    </source>
</evidence>
<evidence type="ECO:0000250" key="3">
    <source>
        <dbReference type="UniProtKB" id="Q9JID1"/>
    </source>
</evidence>
<evidence type="ECO:0000255" key="4"/>
<evidence type="ECO:0000255" key="5">
    <source>
        <dbReference type="PROSITE-ProRule" id="PRU00698"/>
    </source>
</evidence>
<evidence type="ECO:0000256" key="6">
    <source>
        <dbReference type="SAM" id="MobiDB-lite"/>
    </source>
</evidence>
<evidence type="ECO:0000305" key="7"/>
<keyword id="KW-0007">Acetylation</keyword>
<keyword id="KW-0053">Apoptosis</keyword>
<keyword id="KW-0963">Cytoplasm</keyword>
<keyword id="KW-0539">Nucleus</keyword>
<keyword id="KW-0597">Phosphoprotein</keyword>
<keyword id="KW-1185">Reference proteome</keyword>
<keyword id="KW-0677">Repeat</keyword>
<keyword id="KW-0694">RNA-binding</keyword>
<keyword id="KW-0043">Tumor suppressor</keyword>
<keyword id="KW-0832">Ubl conjugation</keyword>
<gene>
    <name type="primary">PDCD4</name>
</gene>
<sequence>MDVENEQILNVNPADPDNLSDSLFSGDEESAGTEEIKNEINGNWISASSINEARINAKAKRRLRKNSSRDSGRGDSVSDNGSDTLRSGVTVPTSPKGRLLDRRSRSGKGRGLPKKGGAGGKGVWGTPGQVYDVEEVDVKDPNYDDDQENCVYETVVLPLDERAFEKTLTPIIQEYFEHGDTNEVAEMLRDLNLGEMKSGVPVLAVSLALEGKASHREMTSKLLSDLCGTVMSTSDVEKSFDKSLKDLPELALDTPRAPQLVGQFIARAVGDGILCNTYIDSYKGTVDCVQARAALDKATVLLSMSKGGKRKDSVWGSGGGQQSVNHLVKEIDMLLKEYLLSGDISEAEHCLKELEVPHFHHELVYEAIIMVLESTGESTFKMILDLLKSLWKSSTITVDQMKRGYERIYNEIPDINLDVPHSYSVLERFVEECFQAGIISKQLRDLCPSRGRKRFVSEGDGGRLKPESY</sequence>
<dbReference type="EMBL" id="CR859676">
    <property type="protein sequence ID" value="CAH91837.1"/>
    <property type="molecule type" value="mRNA"/>
</dbReference>
<dbReference type="RefSeq" id="NP_001126062.1">
    <property type="nucleotide sequence ID" value="NM_001132590.1"/>
</dbReference>
<dbReference type="BMRB" id="Q5R8S3"/>
<dbReference type="SMR" id="Q5R8S3"/>
<dbReference type="FunCoup" id="Q5R8S3">
    <property type="interactions" value="4154"/>
</dbReference>
<dbReference type="STRING" id="9601.ENSPPYP00000003086"/>
<dbReference type="GeneID" id="100173014"/>
<dbReference type="KEGG" id="pon:100173014"/>
<dbReference type="CTD" id="27250"/>
<dbReference type="eggNOG" id="KOG0403">
    <property type="taxonomic scope" value="Eukaryota"/>
</dbReference>
<dbReference type="InParanoid" id="Q5R8S3"/>
<dbReference type="OrthoDB" id="414546at2759"/>
<dbReference type="Proteomes" id="UP000001595">
    <property type="component" value="Unplaced"/>
</dbReference>
<dbReference type="GO" id="GO:0005829">
    <property type="term" value="C:cytosol"/>
    <property type="evidence" value="ECO:0007669"/>
    <property type="project" value="TreeGrafter"/>
</dbReference>
<dbReference type="GO" id="GO:0005634">
    <property type="term" value="C:nucleus"/>
    <property type="evidence" value="ECO:0007669"/>
    <property type="project" value="UniProtKB-SubCell"/>
</dbReference>
<dbReference type="GO" id="GO:0003723">
    <property type="term" value="F:RNA binding"/>
    <property type="evidence" value="ECO:0007669"/>
    <property type="project" value="UniProtKB-KW"/>
</dbReference>
<dbReference type="GO" id="GO:0006915">
    <property type="term" value="P:apoptotic process"/>
    <property type="evidence" value="ECO:0007669"/>
    <property type="project" value="UniProtKB-KW"/>
</dbReference>
<dbReference type="GO" id="GO:0045892">
    <property type="term" value="P:negative regulation of DNA-templated transcription"/>
    <property type="evidence" value="ECO:0007669"/>
    <property type="project" value="InterPro"/>
</dbReference>
<dbReference type="FunFam" id="1.25.40.180:FF:000008">
    <property type="entry name" value="Programmed cell death protein 4"/>
    <property type="match status" value="1"/>
</dbReference>
<dbReference type="FunFam" id="1.25.40.180:FF:000009">
    <property type="entry name" value="programmed cell death protein 4"/>
    <property type="match status" value="1"/>
</dbReference>
<dbReference type="Gene3D" id="1.25.40.180">
    <property type="match status" value="2"/>
</dbReference>
<dbReference type="InterPro" id="IPR016024">
    <property type="entry name" value="ARM-type_fold"/>
</dbReference>
<dbReference type="InterPro" id="IPR003891">
    <property type="entry name" value="Initiation_fac_eIF4g_MI"/>
</dbReference>
<dbReference type="InterPro" id="IPR039778">
    <property type="entry name" value="PDCD4"/>
</dbReference>
<dbReference type="PANTHER" id="PTHR12626">
    <property type="entry name" value="PROGRAMMED CELL DEATH 4"/>
    <property type="match status" value="1"/>
</dbReference>
<dbReference type="PANTHER" id="PTHR12626:SF3">
    <property type="entry name" value="PROGRAMMED CELL DEATH PROTEIN 4"/>
    <property type="match status" value="1"/>
</dbReference>
<dbReference type="Pfam" id="PF02847">
    <property type="entry name" value="MA3"/>
    <property type="match status" value="2"/>
</dbReference>
<dbReference type="SMART" id="SM00544">
    <property type="entry name" value="MA3"/>
    <property type="match status" value="2"/>
</dbReference>
<dbReference type="SUPFAM" id="SSF48371">
    <property type="entry name" value="ARM repeat"/>
    <property type="match status" value="2"/>
</dbReference>
<dbReference type="PROSITE" id="PS51366">
    <property type="entry name" value="MI"/>
    <property type="match status" value="2"/>
</dbReference>
<organism>
    <name type="scientific">Pongo abelii</name>
    <name type="common">Sumatran orangutan</name>
    <name type="synonym">Pongo pygmaeus abelii</name>
    <dbReference type="NCBI Taxonomy" id="9601"/>
    <lineage>
        <taxon>Eukaryota</taxon>
        <taxon>Metazoa</taxon>
        <taxon>Chordata</taxon>
        <taxon>Craniata</taxon>
        <taxon>Vertebrata</taxon>
        <taxon>Euteleostomi</taxon>
        <taxon>Mammalia</taxon>
        <taxon>Eutheria</taxon>
        <taxon>Euarchontoglires</taxon>
        <taxon>Primates</taxon>
        <taxon>Haplorrhini</taxon>
        <taxon>Catarrhini</taxon>
        <taxon>Hominidae</taxon>
        <taxon>Pongo</taxon>
    </lineage>
</organism>
<name>PDCD4_PONAB</name>